<feature type="chain" id="PRO_1000054607" description="Large ribosomal subunit protein uL16">
    <location>
        <begin position="1"/>
        <end position="147"/>
    </location>
</feature>
<gene>
    <name evidence="1" type="primary">rplP</name>
    <name type="ordered locus">CLI_3656</name>
</gene>
<comment type="function">
    <text evidence="1">Binds 23S rRNA and is also seen to make contacts with the A and possibly P site tRNAs.</text>
</comment>
<comment type="subunit">
    <text evidence="1">Part of the 50S ribosomal subunit.</text>
</comment>
<comment type="similarity">
    <text evidence="1">Belongs to the universal ribosomal protein uL16 family.</text>
</comment>
<proteinExistence type="inferred from homology"/>
<sequence>MLMPKRVKRRKVQRGRMKGKATRGNFIAYGDFGIQATECGWITSNQIEAARIAINRYVKRGGKVWIKIFPDKPVTEKPAETRMGSGKGSPEYWVAVVKPGRVLFEISGVSETVAREAMRLASHKLPVKTKFVTRRDFEEMGGEVNEG</sequence>
<keyword id="KW-0687">Ribonucleoprotein</keyword>
<keyword id="KW-0689">Ribosomal protein</keyword>
<keyword id="KW-0694">RNA-binding</keyword>
<keyword id="KW-0699">rRNA-binding</keyword>
<keyword id="KW-0820">tRNA-binding</keyword>
<evidence type="ECO:0000255" key="1">
    <source>
        <dbReference type="HAMAP-Rule" id="MF_01342"/>
    </source>
</evidence>
<evidence type="ECO:0000305" key="2"/>
<reference key="1">
    <citation type="submission" date="2007-06" db="EMBL/GenBank/DDBJ databases">
        <authorList>
            <person name="Brinkac L.M."/>
            <person name="Daugherty S."/>
            <person name="Dodson R.J."/>
            <person name="Madupu R."/>
            <person name="Brown J.L."/>
            <person name="Bruce D."/>
            <person name="Detter C."/>
            <person name="Munk C."/>
            <person name="Smith L.A."/>
            <person name="Smith T.J."/>
            <person name="White O."/>
            <person name="Brettin T.S."/>
        </authorList>
    </citation>
    <scope>NUCLEOTIDE SEQUENCE [LARGE SCALE GENOMIC DNA]</scope>
    <source>
        <strain>Langeland / NCTC 10281 / Type F</strain>
    </source>
</reference>
<organism>
    <name type="scientific">Clostridium botulinum (strain Langeland / NCTC 10281 / Type F)</name>
    <dbReference type="NCBI Taxonomy" id="441772"/>
    <lineage>
        <taxon>Bacteria</taxon>
        <taxon>Bacillati</taxon>
        <taxon>Bacillota</taxon>
        <taxon>Clostridia</taxon>
        <taxon>Eubacteriales</taxon>
        <taxon>Clostridiaceae</taxon>
        <taxon>Clostridium</taxon>
    </lineage>
</organism>
<accession>A7GJ67</accession>
<name>RL16_CLOBL</name>
<protein>
    <recommendedName>
        <fullName evidence="1">Large ribosomal subunit protein uL16</fullName>
    </recommendedName>
    <alternativeName>
        <fullName evidence="2">50S ribosomal protein L16</fullName>
    </alternativeName>
</protein>
<dbReference type="EMBL" id="CP000728">
    <property type="protein sequence ID" value="ABS42297.1"/>
    <property type="molecule type" value="Genomic_DNA"/>
</dbReference>
<dbReference type="RefSeq" id="WP_003357619.1">
    <property type="nucleotide sequence ID" value="NC_009699.1"/>
</dbReference>
<dbReference type="SMR" id="A7GJ67"/>
<dbReference type="GeneID" id="92940243"/>
<dbReference type="KEGG" id="cbf:CLI_3656"/>
<dbReference type="HOGENOM" id="CLU_078858_2_1_9"/>
<dbReference type="Proteomes" id="UP000002410">
    <property type="component" value="Chromosome"/>
</dbReference>
<dbReference type="GO" id="GO:0022625">
    <property type="term" value="C:cytosolic large ribosomal subunit"/>
    <property type="evidence" value="ECO:0007669"/>
    <property type="project" value="TreeGrafter"/>
</dbReference>
<dbReference type="GO" id="GO:0019843">
    <property type="term" value="F:rRNA binding"/>
    <property type="evidence" value="ECO:0007669"/>
    <property type="project" value="UniProtKB-UniRule"/>
</dbReference>
<dbReference type="GO" id="GO:0003735">
    <property type="term" value="F:structural constituent of ribosome"/>
    <property type="evidence" value="ECO:0007669"/>
    <property type="project" value="InterPro"/>
</dbReference>
<dbReference type="GO" id="GO:0000049">
    <property type="term" value="F:tRNA binding"/>
    <property type="evidence" value="ECO:0007669"/>
    <property type="project" value="UniProtKB-KW"/>
</dbReference>
<dbReference type="GO" id="GO:0006412">
    <property type="term" value="P:translation"/>
    <property type="evidence" value="ECO:0007669"/>
    <property type="project" value="UniProtKB-UniRule"/>
</dbReference>
<dbReference type="CDD" id="cd01433">
    <property type="entry name" value="Ribosomal_L16_L10e"/>
    <property type="match status" value="1"/>
</dbReference>
<dbReference type="FunFam" id="3.90.1170.10:FF:000001">
    <property type="entry name" value="50S ribosomal protein L16"/>
    <property type="match status" value="1"/>
</dbReference>
<dbReference type="Gene3D" id="3.90.1170.10">
    <property type="entry name" value="Ribosomal protein L10e/L16"/>
    <property type="match status" value="1"/>
</dbReference>
<dbReference type="HAMAP" id="MF_01342">
    <property type="entry name" value="Ribosomal_uL16"/>
    <property type="match status" value="1"/>
</dbReference>
<dbReference type="InterPro" id="IPR047873">
    <property type="entry name" value="Ribosomal_uL16"/>
</dbReference>
<dbReference type="InterPro" id="IPR000114">
    <property type="entry name" value="Ribosomal_uL16_bact-type"/>
</dbReference>
<dbReference type="InterPro" id="IPR020798">
    <property type="entry name" value="Ribosomal_uL16_CS"/>
</dbReference>
<dbReference type="InterPro" id="IPR016180">
    <property type="entry name" value="Ribosomal_uL16_dom"/>
</dbReference>
<dbReference type="InterPro" id="IPR036920">
    <property type="entry name" value="Ribosomal_uL16_sf"/>
</dbReference>
<dbReference type="NCBIfam" id="TIGR01164">
    <property type="entry name" value="rplP_bact"/>
    <property type="match status" value="1"/>
</dbReference>
<dbReference type="PANTHER" id="PTHR12220">
    <property type="entry name" value="50S/60S RIBOSOMAL PROTEIN L16"/>
    <property type="match status" value="1"/>
</dbReference>
<dbReference type="PANTHER" id="PTHR12220:SF13">
    <property type="entry name" value="LARGE RIBOSOMAL SUBUNIT PROTEIN UL16M"/>
    <property type="match status" value="1"/>
</dbReference>
<dbReference type="Pfam" id="PF00252">
    <property type="entry name" value="Ribosomal_L16"/>
    <property type="match status" value="1"/>
</dbReference>
<dbReference type="PRINTS" id="PR00060">
    <property type="entry name" value="RIBOSOMALL16"/>
</dbReference>
<dbReference type="SUPFAM" id="SSF54686">
    <property type="entry name" value="Ribosomal protein L16p/L10e"/>
    <property type="match status" value="1"/>
</dbReference>
<dbReference type="PROSITE" id="PS00586">
    <property type="entry name" value="RIBOSOMAL_L16_1"/>
    <property type="match status" value="1"/>
</dbReference>
<dbReference type="PROSITE" id="PS00701">
    <property type="entry name" value="RIBOSOMAL_L16_2"/>
    <property type="match status" value="1"/>
</dbReference>